<gene>
    <name evidence="1" type="primary">rpsF</name>
    <name type="ordered locus">BbuZS7_0115</name>
</gene>
<feature type="chain" id="PRO_1000120710" description="Small ribosomal subunit protein bS6">
    <location>
        <begin position="1"/>
        <end position="139"/>
    </location>
</feature>
<feature type="region of interest" description="Disordered" evidence="2">
    <location>
        <begin position="119"/>
        <end position="139"/>
    </location>
</feature>
<feature type="compositionally biased region" description="Polar residues" evidence="2">
    <location>
        <begin position="130"/>
        <end position="139"/>
    </location>
</feature>
<organism>
    <name type="scientific">Borreliella burgdorferi (strain ZS7)</name>
    <name type="common">Borrelia burgdorferi</name>
    <dbReference type="NCBI Taxonomy" id="445985"/>
    <lineage>
        <taxon>Bacteria</taxon>
        <taxon>Pseudomonadati</taxon>
        <taxon>Spirochaetota</taxon>
        <taxon>Spirochaetia</taxon>
        <taxon>Spirochaetales</taxon>
        <taxon>Borreliaceae</taxon>
        <taxon>Borreliella</taxon>
    </lineage>
</organism>
<proteinExistence type="inferred from homology"/>
<comment type="function">
    <text evidence="1">Binds together with bS18 to 16S ribosomal RNA.</text>
</comment>
<comment type="similarity">
    <text evidence="1">Belongs to the bacterial ribosomal protein bS6 family.</text>
</comment>
<sequence>MIKRYEACFLFKSEEIEYKGSLEEVKKSLEFFGATDVVSNFIGERALEYPIKKQARGRYEIIEFSMEGNNLKEFESRLKLIKNLLRYMILVKIVRKINTKKIKRRNFREFRDNVDKDSLKGASKVETPTGPESTDIQEK</sequence>
<evidence type="ECO:0000255" key="1">
    <source>
        <dbReference type="HAMAP-Rule" id="MF_00360"/>
    </source>
</evidence>
<evidence type="ECO:0000256" key="2">
    <source>
        <dbReference type="SAM" id="MobiDB-lite"/>
    </source>
</evidence>
<evidence type="ECO:0000305" key="3"/>
<reference key="1">
    <citation type="journal article" date="2011" name="J. Bacteriol.">
        <title>Whole-genome sequences of thirteen isolates of Borrelia burgdorferi.</title>
        <authorList>
            <person name="Schutzer S.E."/>
            <person name="Fraser-Liggett C.M."/>
            <person name="Casjens S.R."/>
            <person name="Qiu W.G."/>
            <person name="Dunn J.J."/>
            <person name="Mongodin E.F."/>
            <person name="Luft B.J."/>
        </authorList>
    </citation>
    <scope>NUCLEOTIDE SEQUENCE [LARGE SCALE GENOMIC DNA]</scope>
    <source>
        <strain>ZS7</strain>
    </source>
</reference>
<dbReference type="EMBL" id="CP001205">
    <property type="protein sequence ID" value="ACK74452.1"/>
    <property type="molecule type" value="Genomic_DNA"/>
</dbReference>
<dbReference type="RefSeq" id="WP_012597306.1">
    <property type="nucleotide sequence ID" value="NC_011728.1"/>
</dbReference>
<dbReference type="SMR" id="B7J148"/>
<dbReference type="KEGG" id="bbz:BbuZS7_0115"/>
<dbReference type="HOGENOM" id="CLU_1902635_0_0_12"/>
<dbReference type="Proteomes" id="UP000006901">
    <property type="component" value="Chromosome"/>
</dbReference>
<dbReference type="GO" id="GO:1990904">
    <property type="term" value="C:ribonucleoprotein complex"/>
    <property type="evidence" value="ECO:0007669"/>
    <property type="project" value="UniProtKB-KW"/>
</dbReference>
<dbReference type="GO" id="GO:0005840">
    <property type="term" value="C:ribosome"/>
    <property type="evidence" value="ECO:0007669"/>
    <property type="project" value="UniProtKB-KW"/>
</dbReference>
<dbReference type="GO" id="GO:0019843">
    <property type="term" value="F:rRNA binding"/>
    <property type="evidence" value="ECO:0007669"/>
    <property type="project" value="UniProtKB-UniRule"/>
</dbReference>
<dbReference type="GO" id="GO:0003735">
    <property type="term" value="F:structural constituent of ribosome"/>
    <property type="evidence" value="ECO:0007669"/>
    <property type="project" value="InterPro"/>
</dbReference>
<dbReference type="GO" id="GO:0006412">
    <property type="term" value="P:translation"/>
    <property type="evidence" value="ECO:0007669"/>
    <property type="project" value="UniProtKB-UniRule"/>
</dbReference>
<dbReference type="CDD" id="cd00473">
    <property type="entry name" value="bS6"/>
    <property type="match status" value="1"/>
</dbReference>
<dbReference type="Gene3D" id="3.30.70.60">
    <property type="match status" value="1"/>
</dbReference>
<dbReference type="HAMAP" id="MF_00360">
    <property type="entry name" value="Ribosomal_bS6"/>
    <property type="match status" value="1"/>
</dbReference>
<dbReference type="InterPro" id="IPR000529">
    <property type="entry name" value="Ribosomal_bS6"/>
</dbReference>
<dbReference type="InterPro" id="IPR035980">
    <property type="entry name" value="Ribosomal_bS6_sf"/>
</dbReference>
<dbReference type="InterPro" id="IPR020814">
    <property type="entry name" value="Ribosomal_S6_plastid/chlpt"/>
</dbReference>
<dbReference type="InterPro" id="IPR014717">
    <property type="entry name" value="Transl_elong_EF1B/ribsomal_bS6"/>
</dbReference>
<dbReference type="NCBIfam" id="TIGR00166">
    <property type="entry name" value="S6"/>
    <property type="match status" value="1"/>
</dbReference>
<dbReference type="Pfam" id="PF01250">
    <property type="entry name" value="Ribosomal_S6"/>
    <property type="match status" value="1"/>
</dbReference>
<dbReference type="SUPFAM" id="SSF54995">
    <property type="entry name" value="Ribosomal protein S6"/>
    <property type="match status" value="1"/>
</dbReference>
<accession>B7J148</accession>
<name>RS6_BORBZ</name>
<protein>
    <recommendedName>
        <fullName evidence="1">Small ribosomal subunit protein bS6</fullName>
    </recommendedName>
    <alternativeName>
        <fullName evidence="3">30S ribosomal protein S6</fullName>
    </alternativeName>
</protein>
<keyword id="KW-0687">Ribonucleoprotein</keyword>
<keyword id="KW-0689">Ribosomal protein</keyword>
<keyword id="KW-0694">RNA-binding</keyword>
<keyword id="KW-0699">rRNA-binding</keyword>